<reference key="1">
    <citation type="journal article" date="2002" name="Nucleic Acids Res.">
        <title>The complete genomic sequence of Mycoplasma penetrans, an intracellular bacterial pathogen in humans.</title>
        <authorList>
            <person name="Sasaki Y."/>
            <person name="Ishikawa J."/>
            <person name="Yamashita A."/>
            <person name="Oshima K."/>
            <person name="Kenri T."/>
            <person name="Furuya K."/>
            <person name="Yoshino C."/>
            <person name="Horino A."/>
            <person name="Shiba T."/>
            <person name="Sasaki T."/>
            <person name="Hattori M."/>
        </authorList>
    </citation>
    <scope>NUCLEOTIDE SEQUENCE [LARGE SCALE GENOMIC DNA]</scope>
    <source>
        <strain>HF-2</strain>
    </source>
</reference>
<sequence length="202" mass="23219">MSRYLGSITKKSRRYGFSLLETEREFIKGKKRTYAPGQHGNKRVKLSGYGEQLQEKQKMMYLYGLNDRQFRRTFVIAKHMKGALTLNTFIALESRLDNLVYRMGFAPTRRAARQLVNHGHILLDGKKVTIPSCMVKLEQTIEVAPKSKDLPIVAAGASNTPCKFVDSDLKTKKGKYVRFPERDELPEGINEAYVVEWFNRLV</sequence>
<organism>
    <name type="scientific">Malacoplasma penetrans (strain HF-2)</name>
    <name type="common">Mycoplasma penetrans</name>
    <dbReference type="NCBI Taxonomy" id="272633"/>
    <lineage>
        <taxon>Bacteria</taxon>
        <taxon>Bacillati</taxon>
        <taxon>Mycoplasmatota</taxon>
        <taxon>Mycoplasmoidales</taxon>
        <taxon>Mycoplasmoidaceae</taxon>
        <taxon>Malacoplasma</taxon>
    </lineage>
</organism>
<name>RS4_MALP2</name>
<keyword id="KW-1185">Reference proteome</keyword>
<keyword id="KW-0687">Ribonucleoprotein</keyword>
<keyword id="KW-0689">Ribosomal protein</keyword>
<keyword id="KW-0694">RNA-binding</keyword>
<keyword id="KW-0699">rRNA-binding</keyword>
<protein>
    <recommendedName>
        <fullName evidence="1">Small ribosomal subunit protein uS4</fullName>
    </recommendedName>
    <alternativeName>
        <fullName evidence="2">30S ribosomal protein S4</fullName>
    </alternativeName>
</protein>
<accession>Q8EV12</accession>
<dbReference type="EMBL" id="BA000026">
    <property type="protein sequence ID" value="BAC44549.1"/>
    <property type="molecule type" value="Genomic_DNA"/>
</dbReference>
<dbReference type="RefSeq" id="WP_011077578.1">
    <property type="nucleotide sequence ID" value="NC_004432.1"/>
</dbReference>
<dbReference type="SMR" id="Q8EV12"/>
<dbReference type="FunCoup" id="Q8EV12">
    <property type="interactions" value="252"/>
</dbReference>
<dbReference type="STRING" id="272633.gene:10731878"/>
<dbReference type="KEGG" id="mpe:MYPE7550"/>
<dbReference type="eggNOG" id="COG0522">
    <property type="taxonomic scope" value="Bacteria"/>
</dbReference>
<dbReference type="HOGENOM" id="CLU_092403_0_1_14"/>
<dbReference type="InParanoid" id="Q8EV12"/>
<dbReference type="Proteomes" id="UP000002522">
    <property type="component" value="Chromosome"/>
</dbReference>
<dbReference type="GO" id="GO:0015935">
    <property type="term" value="C:small ribosomal subunit"/>
    <property type="evidence" value="ECO:0007669"/>
    <property type="project" value="InterPro"/>
</dbReference>
<dbReference type="GO" id="GO:0019843">
    <property type="term" value="F:rRNA binding"/>
    <property type="evidence" value="ECO:0007669"/>
    <property type="project" value="UniProtKB-UniRule"/>
</dbReference>
<dbReference type="GO" id="GO:0003735">
    <property type="term" value="F:structural constituent of ribosome"/>
    <property type="evidence" value="ECO:0007669"/>
    <property type="project" value="InterPro"/>
</dbReference>
<dbReference type="GO" id="GO:0042274">
    <property type="term" value="P:ribosomal small subunit biogenesis"/>
    <property type="evidence" value="ECO:0007669"/>
    <property type="project" value="TreeGrafter"/>
</dbReference>
<dbReference type="GO" id="GO:0006412">
    <property type="term" value="P:translation"/>
    <property type="evidence" value="ECO:0007669"/>
    <property type="project" value="UniProtKB-UniRule"/>
</dbReference>
<dbReference type="CDD" id="cd00165">
    <property type="entry name" value="S4"/>
    <property type="match status" value="1"/>
</dbReference>
<dbReference type="FunFam" id="3.10.290.10:FF:000001">
    <property type="entry name" value="30S ribosomal protein S4"/>
    <property type="match status" value="1"/>
</dbReference>
<dbReference type="Gene3D" id="1.10.1050.10">
    <property type="entry name" value="Ribosomal Protein S4 Delta 41, Chain A, domain 1"/>
    <property type="match status" value="1"/>
</dbReference>
<dbReference type="Gene3D" id="3.10.290.10">
    <property type="entry name" value="RNA-binding S4 domain"/>
    <property type="match status" value="1"/>
</dbReference>
<dbReference type="HAMAP" id="MF_01306_B">
    <property type="entry name" value="Ribosomal_uS4_B"/>
    <property type="match status" value="1"/>
</dbReference>
<dbReference type="InterPro" id="IPR022801">
    <property type="entry name" value="Ribosomal_uS4"/>
</dbReference>
<dbReference type="InterPro" id="IPR005709">
    <property type="entry name" value="Ribosomal_uS4_bac-type"/>
</dbReference>
<dbReference type="InterPro" id="IPR018079">
    <property type="entry name" value="Ribosomal_uS4_CS"/>
</dbReference>
<dbReference type="InterPro" id="IPR001912">
    <property type="entry name" value="Ribosomal_uS4_N"/>
</dbReference>
<dbReference type="InterPro" id="IPR002942">
    <property type="entry name" value="S4_RNA-bd"/>
</dbReference>
<dbReference type="InterPro" id="IPR036986">
    <property type="entry name" value="S4_RNA-bd_sf"/>
</dbReference>
<dbReference type="NCBIfam" id="NF003717">
    <property type="entry name" value="PRK05327.1"/>
    <property type="match status" value="1"/>
</dbReference>
<dbReference type="NCBIfam" id="TIGR01017">
    <property type="entry name" value="rpsD_bact"/>
    <property type="match status" value="1"/>
</dbReference>
<dbReference type="PANTHER" id="PTHR11831">
    <property type="entry name" value="30S 40S RIBOSOMAL PROTEIN"/>
    <property type="match status" value="1"/>
</dbReference>
<dbReference type="PANTHER" id="PTHR11831:SF4">
    <property type="entry name" value="SMALL RIBOSOMAL SUBUNIT PROTEIN US4M"/>
    <property type="match status" value="1"/>
</dbReference>
<dbReference type="Pfam" id="PF00163">
    <property type="entry name" value="Ribosomal_S4"/>
    <property type="match status" value="1"/>
</dbReference>
<dbReference type="Pfam" id="PF01479">
    <property type="entry name" value="S4"/>
    <property type="match status" value="1"/>
</dbReference>
<dbReference type="SMART" id="SM01390">
    <property type="entry name" value="Ribosomal_S4"/>
    <property type="match status" value="1"/>
</dbReference>
<dbReference type="SMART" id="SM00363">
    <property type="entry name" value="S4"/>
    <property type="match status" value="1"/>
</dbReference>
<dbReference type="SUPFAM" id="SSF55174">
    <property type="entry name" value="Alpha-L RNA-binding motif"/>
    <property type="match status" value="1"/>
</dbReference>
<dbReference type="PROSITE" id="PS00632">
    <property type="entry name" value="RIBOSOMAL_S4"/>
    <property type="match status" value="1"/>
</dbReference>
<dbReference type="PROSITE" id="PS50889">
    <property type="entry name" value="S4"/>
    <property type="match status" value="1"/>
</dbReference>
<evidence type="ECO:0000255" key="1">
    <source>
        <dbReference type="HAMAP-Rule" id="MF_01306"/>
    </source>
</evidence>
<evidence type="ECO:0000305" key="2"/>
<feature type="chain" id="PRO_0000132418" description="Small ribosomal subunit protein uS4">
    <location>
        <begin position="1"/>
        <end position="202"/>
    </location>
</feature>
<feature type="domain" description="S4 RNA-binding" evidence="1">
    <location>
        <begin position="94"/>
        <end position="157"/>
    </location>
</feature>
<comment type="function">
    <text evidence="1">One of the primary rRNA binding proteins, it binds directly to 16S rRNA where it nucleates assembly of the body of the 30S subunit.</text>
</comment>
<comment type="function">
    <text evidence="1">With S5 and S12 plays an important role in translational accuracy.</text>
</comment>
<comment type="subunit">
    <text evidence="1">Part of the 30S ribosomal subunit. Contacts protein S5. The interaction surface between S4 and S5 is involved in control of translational fidelity.</text>
</comment>
<comment type="similarity">
    <text evidence="1">Belongs to the universal ribosomal protein uS4 family.</text>
</comment>
<gene>
    <name evidence="1" type="primary">rpsD</name>
    <name type="ordered locus">MYPE7550</name>
</gene>
<proteinExistence type="inferred from homology"/>